<comment type="function">
    <text evidence="1">Involved in the anomeric conversion of L-fucose.</text>
</comment>
<comment type="catalytic activity">
    <reaction evidence="1">
        <text>alpha-L-fucose = beta-L-fucose</text>
        <dbReference type="Rhea" id="RHEA:25580"/>
        <dbReference type="ChEBI" id="CHEBI:42548"/>
        <dbReference type="ChEBI" id="CHEBI:42589"/>
        <dbReference type="EC" id="5.1.3.29"/>
    </reaction>
</comment>
<comment type="pathway">
    <text evidence="1">Carbohydrate metabolism; L-fucose metabolism.</text>
</comment>
<comment type="subunit">
    <text evidence="1">Homodecamer.</text>
</comment>
<comment type="subcellular location">
    <subcellularLocation>
        <location evidence="1">Cytoplasm</location>
    </subcellularLocation>
</comment>
<comment type="similarity">
    <text evidence="1">Belongs to the RbsD / FucU family. FucU mutarotase subfamily.</text>
</comment>
<dbReference type="EC" id="5.1.3.29" evidence="1"/>
<dbReference type="EMBL" id="CP000800">
    <property type="protein sequence ID" value="ABV18562.1"/>
    <property type="molecule type" value="Genomic_DNA"/>
</dbReference>
<dbReference type="RefSeq" id="WP_000920840.1">
    <property type="nucleotide sequence ID" value="NC_009801.1"/>
</dbReference>
<dbReference type="SMR" id="A7ZQP8"/>
<dbReference type="GeneID" id="93779194"/>
<dbReference type="KEGG" id="ecw:EcE24377A_3109"/>
<dbReference type="HOGENOM" id="CLU_120075_1_0_6"/>
<dbReference type="UniPathway" id="UPA00956"/>
<dbReference type="Proteomes" id="UP000001122">
    <property type="component" value="Chromosome"/>
</dbReference>
<dbReference type="GO" id="GO:0005737">
    <property type="term" value="C:cytoplasm"/>
    <property type="evidence" value="ECO:0007669"/>
    <property type="project" value="UniProtKB-SubCell"/>
</dbReference>
<dbReference type="GO" id="GO:0042806">
    <property type="term" value="F:fucose binding"/>
    <property type="evidence" value="ECO:0007669"/>
    <property type="project" value="InterPro"/>
</dbReference>
<dbReference type="GO" id="GO:0036373">
    <property type="term" value="F:L-fucose mutarotase activity"/>
    <property type="evidence" value="ECO:0007669"/>
    <property type="project" value="UniProtKB-EC"/>
</dbReference>
<dbReference type="GO" id="GO:0036065">
    <property type="term" value="P:fucosylation"/>
    <property type="evidence" value="ECO:0007669"/>
    <property type="project" value="TreeGrafter"/>
</dbReference>
<dbReference type="GO" id="GO:0042354">
    <property type="term" value="P:L-fucose metabolic process"/>
    <property type="evidence" value="ECO:0007669"/>
    <property type="project" value="UniProtKB-UniRule"/>
</dbReference>
<dbReference type="FunFam" id="3.40.1650.10:FF:000001">
    <property type="entry name" value="L-fucose mutarotase"/>
    <property type="match status" value="1"/>
</dbReference>
<dbReference type="Gene3D" id="3.40.1650.10">
    <property type="entry name" value="RbsD-like domain"/>
    <property type="match status" value="1"/>
</dbReference>
<dbReference type="HAMAP" id="MF_01662">
    <property type="entry name" value="L_fucose_rotase"/>
    <property type="match status" value="1"/>
</dbReference>
<dbReference type="InterPro" id="IPR023751">
    <property type="entry name" value="L-fucose_mutarotase"/>
</dbReference>
<dbReference type="InterPro" id="IPR023750">
    <property type="entry name" value="RbsD-like_sf"/>
</dbReference>
<dbReference type="InterPro" id="IPR050443">
    <property type="entry name" value="RbsD/FucU_mutarotase"/>
</dbReference>
<dbReference type="InterPro" id="IPR007721">
    <property type="entry name" value="RbsD_FucU"/>
</dbReference>
<dbReference type="NCBIfam" id="NF011949">
    <property type="entry name" value="PRK15420.1"/>
    <property type="match status" value="1"/>
</dbReference>
<dbReference type="PANTHER" id="PTHR31690">
    <property type="entry name" value="FUCOSE MUTAROTASE"/>
    <property type="match status" value="1"/>
</dbReference>
<dbReference type="PANTHER" id="PTHR31690:SF4">
    <property type="entry name" value="FUCOSE MUTAROTASE"/>
    <property type="match status" value="1"/>
</dbReference>
<dbReference type="Pfam" id="PF05025">
    <property type="entry name" value="RbsD_FucU"/>
    <property type="match status" value="1"/>
</dbReference>
<dbReference type="SUPFAM" id="SSF102546">
    <property type="entry name" value="RbsD-like"/>
    <property type="match status" value="1"/>
</dbReference>
<feature type="chain" id="PRO_0000344542" description="L-fucose mutarotase">
    <location>
        <begin position="1"/>
        <end position="140"/>
    </location>
</feature>
<feature type="active site" description="Proton donor" evidence="1">
    <location>
        <position position="22"/>
    </location>
</feature>
<feature type="binding site" evidence="1">
    <location>
        <position position="30"/>
    </location>
    <ligand>
        <name>substrate</name>
    </ligand>
</feature>
<feature type="binding site" evidence="1">
    <location>
        <position position="107"/>
    </location>
    <ligand>
        <name>substrate</name>
    </ligand>
</feature>
<feature type="binding site" evidence="1">
    <location>
        <begin position="129"/>
        <end position="131"/>
    </location>
    <ligand>
        <name>substrate</name>
    </ligand>
</feature>
<proteinExistence type="inferred from homology"/>
<keyword id="KW-0119">Carbohydrate metabolism</keyword>
<keyword id="KW-0963">Cytoplasm</keyword>
<keyword id="KW-0294">Fucose metabolism</keyword>
<keyword id="KW-0413">Isomerase</keyword>
<keyword id="KW-1185">Reference proteome</keyword>
<sequence>MLKTISPLISPELLKVLAEMGHGDEIIFSDAHFPAHSMGPQVIRADGLLVSDLLQAIIPLFELDSYAPPLVMMAAVEGDTLDPEVERRYRNALSLQAPCPDIIRINRFAFYERAQKAFAIVITGERAKYGNILLKKGVTP</sequence>
<gene>
    <name evidence="1" type="primary">fucU</name>
    <name type="ordered locus">EcE24377A_3109</name>
</gene>
<protein>
    <recommendedName>
        <fullName evidence="1">L-fucose mutarotase</fullName>
        <ecNumber evidence="1">5.1.3.29</ecNumber>
    </recommendedName>
    <alternativeName>
        <fullName evidence="1">Fucose 1-epimerase</fullName>
    </alternativeName>
    <alternativeName>
        <fullName evidence="1">Type-2 mutarotase</fullName>
    </alternativeName>
</protein>
<reference key="1">
    <citation type="journal article" date="2008" name="J. Bacteriol.">
        <title>The pangenome structure of Escherichia coli: comparative genomic analysis of E. coli commensal and pathogenic isolates.</title>
        <authorList>
            <person name="Rasko D.A."/>
            <person name="Rosovitz M.J."/>
            <person name="Myers G.S.A."/>
            <person name="Mongodin E.F."/>
            <person name="Fricke W.F."/>
            <person name="Gajer P."/>
            <person name="Crabtree J."/>
            <person name="Sebaihia M."/>
            <person name="Thomson N.R."/>
            <person name="Chaudhuri R."/>
            <person name="Henderson I.R."/>
            <person name="Sperandio V."/>
            <person name="Ravel J."/>
        </authorList>
    </citation>
    <scope>NUCLEOTIDE SEQUENCE [LARGE SCALE GENOMIC DNA]</scope>
    <source>
        <strain>E24377A / ETEC</strain>
    </source>
</reference>
<organism>
    <name type="scientific">Escherichia coli O139:H28 (strain E24377A / ETEC)</name>
    <dbReference type="NCBI Taxonomy" id="331111"/>
    <lineage>
        <taxon>Bacteria</taxon>
        <taxon>Pseudomonadati</taxon>
        <taxon>Pseudomonadota</taxon>
        <taxon>Gammaproteobacteria</taxon>
        <taxon>Enterobacterales</taxon>
        <taxon>Enterobacteriaceae</taxon>
        <taxon>Escherichia</taxon>
    </lineage>
</organism>
<evidence type="ECO:0000255" key="1">
    <source>
        <dbReference type="HAMAP-Rule" id="MF_01662"/>
    </source>
</evidence>
<name>FUCM_ECO24</name>
<accession>A7ZQP8</accession>